<reference key="1">
    <citation type="journal article" date="1999" name="J. Biol. Chem.">
        <title>Molecular cloning and characterization of a plasma membrane-associated sialidase specific for gangliosides.</title>
        <authorList>
            <person name="Miyagi T."/>
            <person name="Wada T."/>
            <person name="Iwamatsu A."/>
            <person name="Hata K."/>
            <person name="Yoshikawa Y."/>
            <person name="Tokuyama S."/>
            <person name="Sawada M."/>
        </authorList>
    </citation>
    <scope>NUCLEOTIDE SEQUENCE [MRNA]</scope>
    <scope>PARTIAL PROTEIN SEQUENCE</scope>
    <scope>FUNCTION</scope>
    <scope>CATALYTIC ACTIVITY</scope>
    <scope>TISSUE SPECIFICITY</scope>
    <scope>SUBCELLULAR LOCATION</scope>
    <source>
        <tissue>Brain</tissue>
    </source>
</reference>
<proteinExistence type="evidence at protein level"/>
<comment type="function">
    <text evidence="3 5">Exo-alpha-sialidase that catalyzes the hydrolytic cleavage of the terminal sialic acid (N-acetylneuraminic acid, Neu5Ac) of a glycan moiety in the catabolism of glycolipids, glycoproteins and oligosacharides. Displays high catalytic efficiency for gangliosides including alpha-(2-&gt;3)-sialylated GD1a and GM3 and alpha-(2-&gt;8)-sialylated GD3 (PubMed:9988745). Plays a role in the regulation of transmembrane signaling through the modulation of ganglioside content of the lipid bilayer and by direct interaction with signaling receptors, such as EGFR. Desialylates EGFR and activates downstream signaling in proliferating cells. Contributes to clathrin-mediated endocytosis by regulating sorting of endocytosed receptors to early and recycling endosomes (By similarity).</text>
</comment>
<comment type="catalytic activity">
    <reaction evidence="5">
        <text>Hydrolysis of alpha-(2-&gt;3)-, alpha-(2-&gt;6)-, alpha-(2-&gt;8)- glycosidic linkages of terminal sialic acid residues in oligosaccharides, glycoproteins, glycolipids, colominic acid and synthetic substrates.</text>
        <dbReference type="EC" id="3.2.1.18"/>
    </reaction>
</comment>
<comment type="catalytic activity">
    <reaction evidence="5">
        <text>a ganglioside GD1a + H2O = a ganglioside GM1 + N-acetylneuraminate</text>
        <dbReference type="Rhea" id="RHEA:47832"/>
        <dbReference type="ChEBI" id="CHEBI:15377"/>
        <dbReference type="ChEBI" id="CHEBI:35418"/>
        <dbReference type="ChEBI" id="CHEBI:82637"/>
        <dbReference type="ChEBI" id="CHEBI:82639"/>
    </reaction>
    <physiologicalReaction direction="left-to-right" evidence="7">
        <dbReference type="Rhea" id="RHEA:47833"/>
    </physiologicalReaction>
</comment>
<comment type="catalytic activity">
    <reaction evidence="3">
        <text>a ganglioside GD1a (d18:1(4E)) + H2O = a ganglioside GM1 (d18:1(4E)) + N-acetylneuraminate</text>
        <dbReference type="Rhea" id="RHEA:47856"/>
        <dbReference type="ChEBI" id="CHEBI:15377"/>
        <dbReference type="ChEBI" id="CHEBI:35418"/>
        <dbReference type="ChEBI" id="CHEBI:77709"/>
        <dbReference type="ChEBI" id="CHEBI:78445"/>
    </reaction>
    <physiologicalReaction direction="left-to-right" evidence="3">
        <dbReference type="Rhea" id="RHEA:47857"/>
    </physiologicalReaction>
</comment>
<comment type="catalytic activity">
    <reaction evidence="5">
        <text>a ganglioside GD1b + H2O = a ganglioside GM1 + N-acetylneuraminate</text>
        <dbReference type="Rhea" id="RHEA:47876"/>
        <dbReference type="ChEBI" id="CHEBI:15377"/>
        <dbReference type="ChEBI" id="CHEBI:35418"/>
        <dbReference type="ChEBI" id="CHEBI:82639"/>
        <dbReference type="ChEBI" id="CHEBI:82939"/>
    </reaction>
    <physiologicalReaction direction="left-to-right" evidence="7">
        <dbReference type="Rhea" id="RHEA:47877"/>
    </physiologicalReaction>
</comment>
<comment type="catalytic activity">
    <reaction evidence="3">
        <text>a ganglioside GD1b (d18:1(4E)) + H2O = a ganglioside GM1 (d18:1(4E)) + N-acetylneuraminate</text>
        <dbReference type="Rhea" id="RHEA:48064"/>
        <dbReference type="ChEBI" id="CHEBI:15377"/>
        <dbReference type="ChEBI" id="CHEBI:35418"/>
        <dbReference type="ChEBI" id="CHEBI:77709"/>
        <dbReference type="ChEBI" id="CHEBI:87785"/>
    </reaction>
    <physiologicalReaction direction="left-to-right" evidence="3">
        <dbReference type="Rhea" id="RHEA:48065"/>
    </physiologicalReaction>
</comment>
<comment type="catalytic activity">
    <reaction evidence="5">
        <text>a ganglioside GD3 + H2O = a ganglioside GM3 + N-acetylneuraminate</text>
        <dbReference type="Rhea" id="RHEA:48120"/>
        <dbReference type="ChEBI" id="CHEBI:15377"/>
        <dbReference type="ChEBI" id="CHEBI:35418"/>
        <dbReference type="ChEBI" id="CHEBI:79210"/>
        <dbReference type="ChEBI" id="CHEBI:79214"/>
    </reaction>
    <physiologicalReaction direction="left-to-right" evidence="7">
        <dbReference type="Rhea" id="RHEA:48121"/>
    </physiologicalReaction>
</comment>
<comment type="catalytic activity">
    <reaction evidence="3">
        <text>a ganglioside GD3 (d18:1(4E)) + H2O = a ganglioside GM3 (d18:1(4E)) + N-acetylneuraminate</text>
        <dbReference type="Rhea" id="RHEA:48124"/>
        <dbReference type="ChEBI" id="CHEBI:15377"/>
        <dbReference type="ChEBI" id="CHEBI:35418"/>
        <dbReference type="ChEBI" id="CHEBI:60065"/>
        <dbReference type="ChEBI" id="CHEBI:78436"/>
    </reaction>
    <physiologicalReaction direction="left-to-right" evidence="3">
        <dbReference type="Rhea" id="RHEA:48125"/>
    </physiologicalReaction>
</comment>
<comment type="catalytic activity">
    <reaction evidence="5">
        <text>a ganglioside GM3 + H2O = a beta-D-galactosyl-(1-&gt;4)-beta-D-glucosyl-(1&lt;-&gt;1)-ceramide + N-acetylneuraminate</text>
        <dbReference type="Rhea" id="RHEA:48136"/>
        <dbReference type="ChEBI" id="CHEBI:15377"/>
        <dbReference type="ChEBI" id="CHEBI:35418"/>
        <dbReference type="ChEBI" id="CHEBI:79208"/>
        <dbReference type="ChEBI" id="CHEBI:79210"/>
    </reaction>
    <physiologicalReaction direction="left-to-right" evidence="7">
        <dbReference type="Rhea" id="RHEA:48137"/>
    </physiologicalReaction>
</comment>
<comment type="catalytic activity">
    <reaction evidence="2">
        <text>a ganglioside GM1 + H2O = a ganglioside GA1 + N-acetylneuraminate</text>
        <dbReference type="Rhea" id="RHEA:47872"/>
        <dbReference type="ChEBI" id="CHEBI:15377"/>
        <dbReference type="ChEBI" id="CHEBI:35418"/>
        <dbReference type="ChEBI" id="CHEBI:82639"/>
        <dbReference type="ChEBI" id="CHEBI:88069"/>
    </reaction>
    <physiologicalReaction direction="left-to-right" evidence="2">
        <dbReference type="Rhea" id="RHEA:47873"/>
    </physiologicalReaction>
</comment>
<comment type="catalytic activity">
    <reaction evidence="2">
        <text>a ganglioside GM1 (d18:1(4E)) + H2O = a ganglioside GA1 (d18:1(4E)) + N-acetylneuraminate</text>
        <dbReference type="Rhea" id="RHEA:48072"/>
        <dbReference type="ChEBI" id="CHEBI:15377"/>
        <dbReference type="ChEBI" id="CHEBI:27938"/>
        <dbReference type="ChEBI" id="CHEBI:35418"/>
        <dbReference type="ChEBI" id="CHEBI:77709"/>
    </reaction>
    <physiologicalReaction direction="left-to-right" evidence="2">
        <dbReference type="Rhea" id="RHEA:48073"/>
    </physiologicalReaction>
</comment>
<comment type="catalytic activity">
    <reaction evidence="2">
        <text>a ganglioside GM2 (d18:1(4E)) + H2O = a ganglioside GA2 (d18:1(4E)) + N-acetylneuraminate</text>
        <dbReference type="Rhea" id="RHEA:48068"/>
        <dbReference type="ChEBI" id="CHEBI:15377"/>
        <dbReference type="ChEBI" id="CHEBI:27731"/>
        <dbReference type="ChEBI" id="CHEBI:35418"/>
        <dbReference type="ChEBI" id="CHEBI:71502"/>
    </reaction>
    <physiologicalReaction direction="left-to-right" evidence="2">
        <dbReference type="Rhea" id="RHEA:48069"/>
    </physiologicalReaction>
</comment>
<comment type="catalytic activity">
    <reaction evidence="3">
        <text>a ganglioside GM3 (d18:1(4E)) + H2O = a beta-D-Gal-(1-&gt;4)-beta-D-Glc-(1&lt;-&gt;1)-Cer(d18:1(4E)) + N-acetylneuraminate</text>
        <dbReference type="Rhea" id="RHEA:47900"/>
        <dbReference type="ChEBI" id="CHEBI:15377"/>
        <dbReference type="ChEBI" id="CHEBI:17950"/>
        <dbReference type="ChEBI" id="CHEBI:35418"/>
        <dbReference type="ChEBI" id="CHEBI:60065"/>
    </reaction>
    <physiologicalReaction direction="left-to-right" evidence="3">
        <dbReference type="Rhea" id="RHEA:47901"/>
    </physiologicalReaction>
</comment>
<comment type="catalytic activity">
    <reaction evidence="5">
        <text>a ganglioside GT1b + H2O = a ganglioside GD1b + N-acetylneuraminate</text>
        <dbReference type="Rhea" id="RHEA:47828"/>
        <dbReference type="ChEBI" id="CHEBI:15377"/>
        <dbReference type="ChEBI" id="CHEBI:35418"/>
        <dbReference type="ChEBI" id="CHEBI:82939"/>
        <dbReference type="ChEBI" id="CHEBI:82940"/>
    </reaction>
    <physiologicalReaction direction="left-to-right" evidence="7">
        <dbReference type="Rhea" id="RHEA:47829"/>
    </physiologicalReaction>
</comment>
<comment type="subunit">
    <text evidence="3">Interacts with CAV1; this interaction enhances NEU3 sialidase activity within caveola. Interacts with EGFR; this interaction mediates desialylation of EGFR and enhances downstream signaling.</text>
</comment>
<comment type="subcellular location">
    <subcellularLocation>
        <location evidence="5">Cell membrane</location>
        <topology evidence="5">Peripheral membrane protein</topology>
    </subcellularLocation>
    <subcellularLocation>
        <location evidence="3">Membrane</location>
        <location evidence="3">Caveola</location>
    </subcellularLocation>
    <subcellularLocation>
        <location evidence="3">Early endosome membrane</location>
        <topology evidence="3">Peripheral membrane protein</topology>
    </subcellularLocation>
    <subcellularLocation>
        <location evidence="3">Recycling endosome membrane</location>
        <topology evidence="3">Peripheral membrane protein</topology>
    </subcellularLocation>
    <subcellularLocation>
        <location evidence="3">Lysosome membrane</location>
        <topology evidence="3">Peripheral membrane protein</topology>
    </subcellularLocation>
    <text evidence="2 3">Associates with the external leaflet of the plasma membrane (By similarity). S-acylated NEU3 likely spans the lipid bilayer with a portion of C-terminus exposed to cytosol and the catalytic region facing the extracellular space (By similarity).</text>
</comment>
<comment type="tissue specificity">
    <text evidence="5">Expressed in brain.</text>
</comment>
<comment type="PTM">
    <text evidence="3">Palmitoylated; may regulate intracellular trafficking and anchorage to plasma membrane and endomembranes.</text>
</comment>
<comment type="similarity">
    <text evidence="6">Belongs to the glycosyl hydrolase 33 family.</text>
</comment>
<keyword id="KW-0119">Carbohydrate metabolism</keyword>
<keyword id="KW-1003">Cell membrane</keyword>
<keyword id="KW-0903">Direct protein sequencing</keyword>
<keyword id="KW-0967">Endosome</keyword>
<keyword id="KW-0326">Glycosidase</keyword>
<keyword id="KW-0378">Hydrolase</keyword>
<keyword id="KW-0442">Lipid degradation</keyword>
<keyword id="KW-0443">Lipid metabolism</keyword>
<keyword id="KW-0449">Lipoprotein</keyword>
<keyword id="KW-0458">Lysosome</keyword>
<keyword id="KW-0472">Membrane</keyword>
<keyword id="KW-0597">Phosphoprotein</keyword>
<keyword id="KW-1185">Reference proteome</keyword>
<keyword id="KW-0677">Repeat</keyword>
<feature type="chain" id="PRO_0000208902" description="Sialidase-3">
    <location>
        <begin position="1"/>
        <end position="428"/>
    </location>
</feature>
<feature type="repeat" description="BNR 1">
    <location>
        <begin position="129"/>
        <end position="140"/>
    </location>
</feature>
<feature type="repeat" description="BNR 2">
    <location>
        <begin position="203"/>
        <end position="214"/>
    </location>
</feature>
<feature type="repeat" description="BNR 3">
    <location>
        <begin position="254"/>
        <end position="265"/>
    </location>
</feature>
<feature type="short sequence motif" description="FRIP motif">
    <location>
        <begin position="24"/>
        <end position="27"/>
    </location>
</feature>
<feature type="active site" description="Proton acceptor" evidence="1">
    <location>
        <position position="50"/>
    </location>
</feature>
<feature type="active site" description="Nucleophile" evidence="1">
    <location>
        <position position="371"/>
    </location>
</feature>
<feature type="active site" evidence="4">
    <location>
        <position position="388"/>
    </location>
</feature>
<feature type="binding site" evidence="1">
    <location>
        <position position="25"/>
    </location>
    <ligand>
        <name>substrate</name>
    </ligand>
</feature>
<feature type="binding site" evidence="1">
    <location>
        <position position="45"/>
    </location>
    <ligand>
        <name>substrate</name>
    </ligand>
</feature>
<feature type="binding site" evidence="1">
    <location>
        <position position="179"/>
    </location>
    <ligand>
        <name>substrate</name>
    </ligand>
</feature>
<feature type="binding site" evidence="1">
    <location>
        <position position="181"/>
    </location>
    <ligand>
        <name>substrate</name>
    </ligand>
</feature>
<feature type="binding site" evidence="1">
    <location>
        <position position="225"/>
    </location>
    <ligand>
        <name>substrate</name>
    </ligand>
</feature>
<feature type="binding site" evidence="4">
    <location>
        <position position="245"/>
    </location>
    <ligand>
        <name>substrate</name>
    </ligand>
</feature>
<feature type="binding site" evidence="1">
    <location>
        <position position="341"/>
    </location>
    <ligand>
        <name>substrate</name>
    </ligand>
</feature>
<feature type="modified residue" description="Phosphoserine" evidence="2">
    <location>
        <position position="314"/>
    </location>
</feature>
<organism>
    <name type="scientific">Bos taurus</name>
    <name type="common">Bovine</name>
    <dbReference type="NCBI Taxonomy" id="9913"/>
    <lineage>
        <taxon>Eukaryota</taxon>
        <taxon>Metazoa</taxon>
        <taxon>Chordata</taxon>
        <taxon>Craniata</taxon>
        <taxon>Vertebrata</taxon>
        <taxon>Euteleostomi</taxon>
        <taxon>Mammalia</taxon>
        <taxon>Eutheria</taxon>
        <taxon>Laurasiatheria</taxon>
        <taxon>Artiodactyla</taxon>
        <taxon>Ruminantia</taxon>
        <taxon>Pecora</taxon>
        <taxon>Bovidae</taxon>
        <taxon>Bovinae</taxon>
        <taxon>Bos</taxon>
    </lineage>
</organism>
<evidence type="ECO:0000250" key="1"/>
<evidence type="ECO:0000250" key="2">
    <source>
        <dbReference type="UniProtKB" id="Q9JMH7"/>
    </source>
</evidence>
<evidence type="ECO:0000250" key="3">
    <source>
        <dbReference type="UniProtKB" id="Q9UQ49"/>
    </source>
</evidence>
<evidence type="ECO:0000255" key="4"/>
<evidence type="ECO:0000269" key="5">
    <source>
    </source>
</evidence>
<evidence type="ECO:0000305" key="6"/>
<evidence type="ECO:0000305" key="7">
    <source>
    </source>
</evidence>
<accession>O97859</accession>
<name>NEUR3_BOVIN</name>
<dbReference type="EC" id="3.2.1.18" evidence="5"/>
<dbReference type="EMBL" id="AB008184">
    <property type="protein sequence ID" value="BAA75071.1"/>
    <property type="molecule type" value="mRNA"/>
</dbReference>
<dbReference type="RefSeq" id="NP_776547.2">
    <property type="nucleotide sequence ID" value="NM_174122.3"/>
</dbReference>
<dbReference type="SMR" id="O97859"/>
<dbReference type="FunCoup" id="O97859">
    <property type="interactions" value="713"/>
</dbReference>
<dbReference type="STRING" id="9913.ENSBTAP00000036593"/>
<dbReference type="CAZy" id="GH33">
    <property type="family name" value="Glycoside Hydrolase Family 33"/>
</dbReference>
<dbReference type="PaxDb" id="9913-ENSBTAP00000036593"/>
<dbReference type="GeneID" id="281349"/>
<dbReference type="KEGG" id="bta:281349"/>
<dbReference type="CTD" id="10825"/>
<dbReference type="eggNOG" id="ENOG502QSFT">
    <property type="taxonomic scope" value="Eukaryota"/>
</dbReference>
<dbReference type="InParanoid" id="O97859"/>
<dbReference type="OrthoDB" id="2739686at2759"/>
<dbReference type="BRENDA" id="3.2.1.18">
    <property type="organism ID" value="908"/>
</dbReference>
<dbReference type="Proteomes" id="UP000009136">
    <property type="component" value="Unplaced"/>
</dbReference>
<dbReference type="GO" id="GO:0005901">
    <property type="term" value="C:caveola"/>
    <property type="evidence" value="ECO:0007669"/>
    <property type="project" value="UniProtKB-SubCell"/>
</dbReference>
<dbReference type="GO" id="GO:0005737">
    <property type="term" value="C:cytoplasm"/>
    <property type="evidence" value="ECO:0000318"/>
    <property type="project" value="GO_Central"/>
</dbReference>
<dbReference type="GO" id="GO:0031901">
    <property type="term" value="C:early endosome membrane"/>
    <property type="evidence" value="ECO:0007669"/>
    <property type="project" value="UniProtKB-SubCell"/>
</dbReference>
<dbReference type="GO" id="GO:0005765">
    <property type="term" value="C:lysosomal membrane"/>
    <property type="evidence" value="ECO:0007669"/>
    <property type="project" value="UniProtKB-SubCell"/>
</dbReference>
<dbReference type="GO" id="GO:0005764">
    <property type="term" value="C:lysosome"/>
    <property type="evidence" value="ECO:0000318"/>
    <property type="project" value="GO_Central"/>
</dbReference>
<dbReference type="GO" id="GO:0016020">
    <property type="term" value="C:membrane"/>
    <property type="evidence" value="ECO:0000318"/>
    <property type="project" value="GO_Central"/>
</dbReference>
<dbReference type="GO" id="GO:0005886">
    <property type="term" value="C:plasma membrane"/>
    <property type="evidence" value="ECO:0000314"/>
    <property type="project" value="UniProtKB"/>
</dbReference>
<dbReference type="GO" id="GO:0055038">
    <property type="term" value="C:recycling endosome membrane"/>
    <property type="evidence" value="ECO:0007669"/>
    <property type="project" value="UniProtKB-SubCell"/>
</dbReference>
<dbReference type="GO" id="GO:0004308">
    <property type="term" value="F:exo-alpha-sialidase activity"/>
    <property type="evidence" value="ECO:0000314"/>
    <property type="project" value="UniProtKB"/>
</dbReference>
<dbReference type="GO" id="GO:0006689">
    <property type="term" value="P:ganglioside catabolic process"/>
    <property type="evidence" value="ECO:0000314"/>
    <property type="project" value="UniProtKB"/>
</dbReference>
<dbReference type="GO" id="GO:0009313">
    <property type="term" value="P:oligosaccharide catabolic process"/>
    <property type="evidence" value="ECO:0000318"/>
    <property type="project" value="GO_Central"/>
</dbReference>
<dbReference type="CDD" id="cd15482">
    <property type="entry name" value="Sialidase_non-viral"/>
    <property type="match status" value="1"/>
</dbReference>
<dbReference type="Gene3D" id="2.120.10.10">
    <property type="match status" value="1"/>
</dbReference>
<dbReference type="InterPro" id="IPR011040">
    <property type="entry name" value="Sialidase"/>
</dbReference>
<dbReference type="InterPro" id="IPR026856">
    <property type="entry name" value="Sialidase_fam"/>
</dbReference>
<dbReference type="InterPro" id="IPR036278">
    <property type="entry name" value="Sialidase_sf"/>
</dbReference>
<dbReference type="PANTHER" id="PTHR10628">
    <property type="entry name" value="SIALIDASE"/>
    <property type="match status" value="1"/>
</dbReference>
<dbReference type="PANTHER" id="PTHR10628:SF23">
    <property type="entry name" value="SIALIDASE-3"/>
    <property type="match status" value="1"/>
</dbReference>
<dbReference type="Pfam" id="PF13088">
    <property type="entry name" value="BNR_2"/>
    <property type="match status" value="1"/>
</dbReference>
<dbReference type="SUPFAM" id="SSF50939">
    <property type="entry name" value="Sialidases"/>
    <property type="match status" value="1"/>
</dbReference>
<protein>
    <recommendedName>
        <fullName>Sialidase-3</fullName>
        <ecNumber evidence="5">3.2.1.18</ecNumber>
    </recommendedName>
    <alternativeName>
        <fullName>Ganglioside sialidase</fullName>
    </alternativeName>
    <alternativeName>
        <fullName>Membrane sialidase</fullName>
    </alternativeName>
    <alternativeName>
        <fullName>N-acetyl-alpha-neuraminidase 3</fullName>
    </alternativeName>
</protein>
<sequence length="428" mass="47917">MEEVTSCSFSSPLFQQEDKRGVTYRIPALIYVPPAHTFLAFAEKRSSSKDEDALHLVLRRGLRTGQSVQWEPLKSLMKATLPGHRTMNPCPVWERKSGYVYLFFICVQGHVTERQQIMSGRNPARLCFICSQDAGYSWSDVRDLTEEVIGPEVTHWATFAVGPGHGIQLQSGRLIIPAYAYYIPFWFFCFRLPYRARPHSLMIYSDDLGATWHHGRLIKPMVTVECEVAEVIGKAGHPVLYCSARTPNRHRAEALSIDHGECFQKPVLSHQLCEPPHGCQGSVVSFCPLEIPGGCQDLAGEDAPAIQQSPLLCSSVRPEPEAGTLSESWLLYSHPTNKKRRVDLGIYLNQSPLEAACWSRPWILHCGPCGYSDLAALENEGLFGCLFECGTKQECEQIAFRLFTDREILSHVQGDCSTPGMNSEPSKK</sequence>
<gene>
    <name type="primary">NEU3</name>
</gene>